<name>TRPD_AZOVD</name>
<organism>
    <name type="scientific">Azotobacter vinelandii (strain DJ / ATCC BAA-1303)</name>
    <dbReference type="NCBI Taxonomy" id="322710"/>
    <lineage>
        <taxon>Bacteria</taxon>
        <taxon>Pseudomonadati</taxon>
        <taxon>Pseudomonadota</taxon>
        <taxon>Gammaproteobacteria</taxon>
        <taxon>Pseudomonadales</taxon>
        <taxon>Pseudomonadaceae</taxon>
        <taxon>Azotobacter</taxon>
    </lineage>
</organism>
<sequence length="348" mass="36721">MDIKQALARVAERLDLNTAEMQGVMRQIMTGQCSDAQIGAFLMGMRMKSESIDEIVGAALVMRELAAPVTIGVERLVDTCGTGGDGMNIFNVSTAAAFVVAAAGGRVAKHGNRAVSGKSGSADLLEAAGVYLELSPEQVARCVESVGVGFMFAPAHHGAMKHAIGPRRELGLRTLFNMLGPMTNPAGVKRQVLGVFSQALCRPLAEVMARLGSVHVLVVHAQDGLDEISLAAPTHIAELRNGEISEYLVQPEDFGIKSQSLIGLDIEGPQESLALIRDALGRRKTEHGQKAAEMIVLNAGAALYAADQAGSLKEGVALAHDALHTGLARDKLEELASITAVFRQENQA</sequence>
<protein>
    <recommendedName>
        <fullName evidence="1">Anthranilate phosphoribosyltransferase</fullName>
        <ecNumber evidence="1">2.4.2.18</ecNumber>
    </recommendedName>
</protein>
<feature type="chain" id="PRO_1000204178" description="Anthranilate phosphoribosyltransferase">
    <location>
        <begin position="1"/>
        <end position="348"/>
    </location>
</feature>
<feature type="binding site" evidence="1">
    <location>
        <position position="81"/>
    </location>
    <ligand>
        <name>5-phospho-alpha-D-ribose 1-diphosphate</name>
        <dbReference type="ChEBI" id="CHEBI:58017"/>
    </ligand>
</feature>
<feature type="binding site" evidence="1">
    <location>
        <position position="81"/>
    </location>
    <ligand>
        <name>anthranilate</name>
        <dbReference type="ChEBI" id="CHEBI:16567"/>
        <label>1</label>
    </ligand>
</feature>
<feature type="binding site" evidence="1">
    <location>
        <begin position="84"/>
        <end position="85"/>
    </location>
    <ligand>
        <name>5-phospho-alpha-D-ribose 1-diphosphate</name>
        <dbReference type="ChEBI" id="CHEBI:58017"/>
    </ligand>
</feature>
<feature type="binding site" evidence="1">
    <location>
        <begin position="91"/>
        <end position="94"/>
    </location>
    <ligand>
        <name>5-phospho-alpha-D-ribose 1-diphosphate</name>
        <dbReference type="ChEBI" id="CHEBI:58017"/>
    </ligand>
</feature>
<feature type="binding site" evidence="1">
    <location>
        <position position="93"/>
    </location>
    <ligand>
        <name>Mg(2+)</name>
        <dbReference type="ChEBI" id="CHEBI:18420"/>
        <label>1</label>
    </ligand>
</feature>
<feature type="binding site" evidence="1">
    <location>
        <begin position="109"/>
        <end position="117"/>
    </location>
    <ligand>
        <name>5-phospho-alpha-D-ribose 1-diphosphate</name>
        <dbReference type="ChEBI" id="CHEBI:58017"/>
    </ligand>
</feature>
<feature type="binding site" evidence="1">
    <location>
        <position position="112"/>
    </location>
    <ligand>
        <name>anthranilate</name>
        <dbReference type="ChEBI" id="CHEBI:16567"/>
        <label>1</label>
    </ligand>
</feature>
<feature type="binding site" evidence="1">
    <location>
        <position position="121"/>
    </location>
    <ligand>
        <name>5-phospho-alpha-D-ribose 1-diphosphate</name>
        <dbReference type="ChEBI" id="CHEBI:58017"/>
    </ligand>
</feature>
<feature type="binding site" evidence="1">
    <location>
        <position position="167"/>
    </location>
    <ligand>
        <name>anthranilate</name>
        <dbReference type="ChEBI" id="CHEBI:16567"/>
        <label>2</label>
    </ligand>
</feature>
<feature type="binding site" evidence="1">
    <location>
        <position position="226"/>
    </location>
    <ligand>
        <name>Mg(2+)</name>
        <dbReference type="ChEBI" id="CHEBI:18420"/>
        <label>2</label>
    </ligand>
</feature>
<feature type="binding site" evidence="1">
    <location>
        <position position="227"/>
    </location>
    <ligand>
        <name>Mg(2+)</name>
        <dbReference type="ChEBI" id="CHEBI:18420"/>
        <label>1</label>
    </ligand>
</feature>
<feature type="binding site" evidence="1">
    <location>
        <position position="227"/>
    </location>
    <ligand>
        <name>Mg(2+)</name>
        <dbReference type="ChEBI" id="CHEBI:18420"/>
        <label>2</label>
    </ligand>
</feature>
<dbReference type="EC" id="2.4.2.18" evidence="1"/>
<dbReference type="EMBL" id="CP001157">
    <property type="protein sequence ID" value="ACO80721.1"/>
    <property type="molecule type" value="Genomic_DNA"/>
</dbReference>
<dbReference type="RefSeq" id="WP_012703084.1">
    <property type="nucleotide sequence ID" value="NC_012560.1"/>
</dbReference>
<dbReference type="SMR" id="C1DHY8"/>
<dbReference type="STRING" id="322710.Avin_46120"/>
<dbReference type="EnsemblBacteria" id="ACO80721">
    <property type="protein sequence ID" value="ACO80721"/>
    <property type="gene ID" value="Avin_46120"/>
</dbReference>
<dbReference type="GeneID" id="88187496"/>
<dbReference type="KEGG" id="avn:Avin_46120"/>
<dbReference type="eggNOG" id="COG0547">
    <property type="taxonomic scope" value="Bacteria"/>
</dbReference>
<dbReference type="HOGENOM" id="CLU_034315_2_1_6"/>
<dbReference type="OrthoDB" id="9806430at2"/>
<dbReference type="UniPathway" id="UPA00035">
    <property type="reaction ID" value="UER00041"/>
</dbReference>
<dbReference type="Proteomes" id="UP000002424">
    <property type="component" value="Chromosome"/>
</dbReference>
<dbReference type="GO" id="GO:0005829">
    <property type="term" value="C:cytosol"/>
    <property type="evidence" value="ECO:0007669"/>
    <property type="project" value="TreeGrafter"/>
</dbReference>
<dbReference type="GO" id="GO:0004048">
    <property type="term" value="F:anthranilate phosphoribosyltransferase activity"/>
    <property type="evidence" value="ECO:0007669"/>
    <property type="project" value="UniProtKB-UniRule"/>
</dbReference>
<dbReference type="GO" id="GO:0000287">
    <property type="term" value="F:magnesium ion binding"/>
    <property type="evidence" value="ECO:0007669"/>
    <property type="project" value="UniProtKB-UniRule"/>
</dbReference>
<dbReference type="GO" id="GO:0000162">
    <property type="term" value="P:L-tryptophan biosynthetic process"/>
    <property type="evidence" value="ECO:0007669"/>
    <property type="project" value="UniProtKB-UniRule"/>
</dbReference>
<dbReference type="FunFam" id="1.20.970.10:FF:000006">
    <property type="entry name" value="Anthranilate phosphoribosyltransferase"/>
    <property type="match status" value="1"/>
</dbReference>
<dbReference type="FunFam" id="3.40.1030.10:FF:000002">
    <property type="entry name" value="Anthranilate phosphoribosyltransferase"/>
    <property type="match status" value="1"/>
</dbReference>
<dbReference type="Gene3D" id="3.40.1030.10">
    <property type="entry name" value="Nucleoside phosphorylase/phosphoribosyltransferase catalytic domain"/>
    <property type="match status" value="1"/>
</dbReference>
<dbReference type="Gene3D" id="1.20.970.10">
    <property type="entry name" value="Transferase, Pyrimidine Nucleoside Phosphorylase, Chain C"/>
    <property type="match status" value="1"/>
</dbReference>
<dbReference type="HAMAP" id="MF_00211">
    <property type="entry name" value="TrpD"/>
    <property type="match status" value="1"/>
</dbReference>
<dbReference type="InterPro" id="IPR005940">
    <property type="entry name" value="Anthranilate_Pribosyl_Tfrase"/>
</dbReference>
<dbReference type="InterPro" id="IPR000312">
    <property type="entry name" value="Glycosyl_Trfase_fam3"/>
</dbReference>
<dbReference type="InterPro" id="IPR017459">
    <property type="entry name" value="Glycosyl_Trfase_fam3_N_dom"/>
</dbReference>
<dbReference type="InterPro" id="IPR036320">
    <property type="entry name" value="Glycosyl_Trfase_fam3_N_dom_sf"/>
</dbReference>
<dbReference type="InterPro" id="IPR035902">
    <property type="entry name" value="Nuc_phospho_transferase"/>
</dbReference>
<dbReference type="NCBIfam" id="TIGR01245">
    <property type="entry name" value="trpD"/>
    <property type="match status" value="1"/>
</dbReference>
<dbReference type="PANTHER" id="PTHR43285">
    <property type="entry name" value="ANTHRANILATE PHOSPHORIBOSYLTRANSFERASE"/>
    <property type="match status" value="1"/>
</dbReference>
<dbReference type="PANTHER" id="PTHR43285:SF2">
    <property type="entry name" value="ANTHRANILATE PHOSPHORIBOSYLTRANSFERASE"/>
    <property type="match status" value="1"/>
</dbReference>
<dbReference type="Pfam" id="PF02885">
    <property type="entry name" value="Glycos_trans_3N"/>
    <property type="match status" value="1"/>
</dbReference>
<dbReference type="Pfam" id="PF00591">
    <property type="entry name" value="Glycos_transf_3"/>
    <property type="match status" value="1"/>
</dbReference>
<dbReference type="SUPFAM" id="SSF52418">
    <property type="entry name" value="Nucleoside phosphorylase/phosphoribosyltransferase catalytic domain"/>
    <property type="match status" value="1"/>
</dbReference>
<dbReference type="SUPFAM" id="SSF47648">
    <property type="entry name" value="Nucleoside phosphorylase/phosphoribosyltransferase N-terminal domain"/>
    <property type="match status" value="1"/>
</dbReference>
<keyword id="KW-0028">Amino-acid biosynthesis</keyword>
<keyword id="KW-0057">Aromatic amino acid biosynthesis</keyword>
<keyword id="KW-0328">Glycosyltransferase</keyword>
<keyword id="KW-0460">Magnesium</keyword>
<keyword id="KW-0479">Metal-binding</keyword>
<keyword id="KW-0808">Transferase</keyword>
<keyword id="KW-0822">Tryptophan biosynthesis</keyword>
<comment type="function">
    <text evidence="1">Catalyzes the transfer of the phosphoribosyl group of 5-phosphorylribose-1-pyrophosphate (PRPP) to anthranilate to yield N-(5'-phosphoribosyl)-anthranilate (PRA).</text>
</comment>
<comment type="catalytic activity">
    <reaction evidence="1">
        <text>N-(5-phospho-beta-D-ribosyl)anthranilate + diphosphate = 5-phospho-alpha-D-ribose 1-diphosphate + anthranilate</text>
        <dbReference type="Rhea" id="RHEA:11768"/>
        <dbReference type="ChEBI" id="CHEBI:16567"/>
        <dbReference type="ChEBI" id="CHEBI:18277"/>
        <dbReference type="ChEBI" id="CHEBI:33019"/>
        <dbReference type="ChEBI" id="CHEBI:58017"/>
        <dbReference type="EC" id="2.4.2.18"/>
    </reaction>
</comment>
<comment type="cofactor">
    <cofactor evidence="1">
        <name>Mg(2+)</name>
        <dbReference type="ChEBI" id="CHEBI:18420"/>
    </cofactor>
    <text evidence="1">Binds 2 magnesium ions per monomer.</text>
</comment>
<comment type="pathway">
    <text evidence="1">Amino-acid biosynthesis; L-tryptophan biosynthesis; L-tryptophan from chorismate: step 2/5.</text>
</comment>
<comment type="subunit">
    <text evidence="1">Homodimer.</text>
</comment>
<comment type="similarity">
    <text evidence="1">Belongs to the anthranilate phosphoribosyltransferase family.</text>
</comment>
<evidence type="ECO:0000255" key="1">
    <source>
        <dbReference type="HAMAP-Rule" id="MF_00211"/>
    </source>
</evidence>
<gene>
    <name evidence="1" type="primary">trpD</name>
    <name type="ordered locus">Avin_46120</name>
</gene>
<proteinExistence type="inferred from homology"/>
<accession>C1DHY8</accession>
<reference key="1">
    <citation type="journal article" date="2009" name="J. Bacteriol.">
        <title>Genome sequence of Azotobacter vinelandii, an obligate aerobe specialized to support diverse anaerobic metabolic processes.</title>
        <authorList>
            <person name="Setubal J.C."/>
            <person name="Dos Santos P."/>
            <person name="Goldman B.S."/>
            <person name="Ertesvaag H."/>
            <person name="Espin G."/>
            <person name="Rubio L.M."/>
            <person name="Valla S."/>
            <person name="Almeida N.F."/>
            <person name="Balasubramanian D."/>
            <person name="Cromes L."/>
            <person name="Curatti L."/>
            <person name="Du Z."/>
            <person name="Godsy E."/>
            <person name="Goodner B."/>
            <person name="Hellner-Burris K."/>
            <person name="Hernandez J.A."/>
            <person name="Houmiel K."/>
            <person name="Imperial J."/>
            <person name="Kennedy C."/>
            <person name="Larson T.J."/>
            <person name="Latreille P."/>
            <person name="Ligon L.S."/>
            <person name="Lu J."/>
            <person name="Maerk M."/>
            <person name="Miller N.M."/>
            <person name="Norton S."/>
            <person name="O'Carroll I.P."/>
            <person name="Paulsen I."/>
            <person name="Raulfs E.C."/>
            <person name="Roemer R."/>
            <person name="Rosser J."/>
            <person name="Segura D."/>
            <person name="Slater S."/>
            <person name="Stricklin S.L."/>
            <person name="Studholme D.J."/>
            <person name="Sun J."/>
            <person name="Viana C.J."/>
            <person name="Wallin E."/>
            <person name="Wang B."/>
            <person name="Wheeler C."/>
            <person name="Zhu H."/>
            <person name="Dean D.R."/>
            <person name="Dixon R."/>
            <person name="Wood D."/>
        </authorList>
    </citation>
    <scope>NUCLEOTIDE SEQUENCE [LARGE SCALE GENOMIC DNA]</scope>
    <source>
        <strain>DJ / ATCC BAA-1303</strain>
    </source>
</reference>